<gene>
    <name type="primary">NLK</name>
</gene>
<organism>
    <name type="scientific">Bos taurus</name>
    <name type="common">Bovine</name>
    <dbReference type="NCBI Taxonomy" id="9913"/>
    <lineage>
        <taxon>Eukaryota</taxon>
        <taxon>Metazoa</taxon>
        <taxon>Chordata</taxon>
        <taxon>Craniata</taxon>
        <taxon>Vertebrata</taxon>
        <taxon>Euteleostomi</taxon>
        <taxon>Mammalia</taxon>
        <taxon>Eutheria</taxon>
        <taxon>Laurasiatheria</taxon>
        <taxon>Artiodactyla</taxon>
        <taxon>Ruminantia</taxon>
        <taxon>Pecora</taxon>
        <taxon>Bovidae</taxon>
        <taxon>Bovinae</taxon>
        <taxon>Bos</taxon>
    </lineage>
</organism>
<comment type="function">
    <text evidence="2">Serine/threonine-protein kinase that regulates a number of transcription factors with key roles in cell fate determination. Positive effector of the non-canonical Wnt signaling pathway, acting downstream of WNT5A, MAP3K7/TAK1 and HIPK2. Negative regulator of the canonical Wnt/beta-catenin signaling pathway. Binds to and phosphorylates TCF7L2/TCF4 and LEF1, promoting the dissociation of the TCF7L2/LEF1/beta-catenin complex from DNA, as well as the ubiquitination and subsequent proteolysis of LEF1. Together these effects inhibit the transcriptional activation of canonical Wnt/beta-catenin target genes. Negative regulator of the Notch signaling pathway. Binds to and phosphorylates NOTCH1, thereby preventing the formation of a transcriptionally active ternary complex of NOTCH1, RBPJ/RBPSUH and MAML1. Negative regulator of the MYB family of transcription factors. Phosphorylation of MYB leads to its subsequent proteolysis while phosphorylation of MYBL1 and MYBL2 inhibits their interaction with the coactivator CREBBP. Other transcription factors may also be inhibited by direct phosphorylation of CREBBP itself. Acts downstream of IL6 and MAP3K7/TAK1 to phosphorylate STAT3, which is in turn required for activation of NLK by MAP3K7/TAK1. Upon IL1B stimulus, cooperates with ATF5 to activate the transactivation activity of C/EBP subfamily members. Phosphorylates ATF5 but also stabilizes ATF5 protein levels in a kinase-independent manner. Acts as an inhibitor of the mTORC1 complex in response to osmotic stress by mediating phosphorylation of RPTOR, thereby preventing recruitment of the mTORC1 complex to lysosomes.</text>
</comment>
<comment type="catalytic activity">
    <reaction evidence="1">
        <text>L-seryl-[protein] + ATP = O-phospho-L-seryl-[protein] + ADP + H(+)</text>
        <dbReference type="Rhea" id="RHEA:17989"/>
        <dbReference type="Rhea" id="RHEA-COMP:9863"/>
        <dbReference type="Rhea" id="RHEA-COMP:11604"/>
        <dbReference type="ChEBI" id="CHEBI:15378"/>
        <dbReference type="ChEBI" id="CHEBI:29999"/>
        <dbReference type="ChEBI" id="CHEBI:30616"/>
        <dbReference type="ChEBI" id="CHEBI:83421"/>
        <dbReference type="ChEBI" id="CHEBI:456216"/>
        <dbReference type="EC" id="2.7.11.24"/>
    </reaction>
</comment>
<comment type="catalytic activity">
    <reaction evidence="1">
        <text>L-threonyl-[protein] + ATP = O-phospho-L-threonyl-[protein] + ADP + H(+)</text>
        <dbReference type="Rhea" id="RHEA:46608"/>
        <dbReference type="Rhea" id="RHEA-COMP:11060"/>
        <dbReference type="Rhea" id="RHEA-COMP:11605"/>
        <dbReference type="ChEBI" id="CHEBI:15378"/>
        <dbReference type="ChEBI" id="CHEBI:30013"/>
        <dbReference type="ChEBI" id="CHEBI:30616"/>
        <dbReference type="ChEBI" id="CHEBI:61977"/>
        <dbReference type="ChEBI" id="CHEBI:456216"/>
        <dbReference type="EC" id="2.7.11.24"/>
    </reaction>
</comment>
<comment type="cofactor">
    <cofactor evidence="1">
        <name>Mg(2+)</name>
        <dbReference type="ChEBI" id="CHEBI:18420"/>
    </cofactor>
</comment>
<comment type="activity regulation">
    <text evidence="1">Activated by the non-canonical Wnt signaling pathway, in which WNT5A leads to activation of MAP3K7/TAK1 and HIPK2, which subsequently phosphorylates and activates this protein. Activated by dimerization and subsequent intermolecular autophosphorylation on Thr-305. Other cytokines such as IL6 may also activate this regulatory circuit (By similarity).</text>
</comment>
<comment type="subunit">
    <text evidence="1 2">Homodimer. Homodimerization is required for intermolecular autophosphorylation, kinase activation and nuclear localization (By similarity). May interact with components of cullin-RING-based SCF (SKP1-CUL1-F-box protein) E3 ubiquitin-protein ligase complexes (By similarity). Interacts with LEF1, MEF2A, MYBL1 and MYBL2 (By similarity). Interacts with the upstream activating kinases HIPK2 and MAP3K7/TAK1. Interaction with MAP3K7/TAK1 seems to be indirect, and may be mediated by other proteins such as STAT3, TAB1 and TAB2. Interacts with and phosphorylates a number of transcription factors including FOXO1, FOXO3, FOXO4, MYB, NOTCH1 and TCF7L2/TCF4. Interacts with DAPK3/ZIPK, and this interaction may disrupt interaction with transcription factors such as TCF7L2/TCF4. Forms a transcriptional repressor complex with CHD7, PPARG and SETDB1. Interacts with RNF138/NARF (By similarity). Interacts with ATF5; the interaction stabilizes ATF5 at the protein level in a kinase-independent manner (By similarity).</text>
</comment>
<comment type="subcellular location">
    <subcellularLocation>
        <location evidence="1">Nucleus</location>
    </subcellularLocation>
    <subcellularLocation>
        <location evidence="1">Cytoplasm</location>
    </subcellularLocation>
    <text evidence="1">Predominantly nuclear. A smaller fraction is cytoplasmic.</text>
</comment>
<comment type="domain">
    <text evidence="1">Contains a TQE activation loop motif in which autophosphorylation of the threonine residue (Thr-305) is sufficient for kinase activation. This mode of activation contrasts with that of classical MAP kinases, which contain a TXY activation loop motif in which phosphorylation of both the threonine and tyrosine residues is required for kinase activation.</text>
</comment>
<comment type="PTM">
    <text evidence="1">Phosphorylated on Thr-305. Intermolecular autophosphorylation on Thr-305 activates the enzyme.</text>
</comment>
<comment type="similarity">
    <text evidence="6">Belongs to the protein kinase superfamily. CMGC Ser/Thr protein kinase family. MAP kinase subfamily.</text>
</comment>
<accession>E1BMN8</accession>
<proteinExistence type="inferred from homology"/>
<dbReference type="EC" id="2.7.11.24" evidence="1"/>
<dbReference type="EMBL" id="AAFC03038599">
    <property type="status" value="NOT_ANNOTATED_CDS"/>
    <property type="molecule type" value="Genomic_DNA"/>
</dbReference>
<dbReference type="EMBL" id="AAFC03038600">
    <property type="status" value="NOT_ANNOTATED_CDS"/>
    <property type="molecule type" value="Genomic_DNA"/>
</dbReference>
<dbReference type="EMBL" id="AAFC03038601">
    <property type="status" value="NOT_ANNOTATED_CDS"/>
    <property type="molecule type" value="Genomic_DNA"/>
</dbReference>
<dbReference type="EMBL" id="AAFC03117551">
    <property type="status" value="NOT_ANNOTATED_CDS"/>
    <property type="molecule type" value="Genomic_DNA"/>
</dbReference>
<dbReference type="EMBL" id="AAFC03125057">
    <property type="status" value="NOT_ANNOTATED_CDS"/>
    <property type="molecule type" value="Genomic_DNA"/>
</dbReference>
<dbReference type="SMR" id="E1BMN8"/>
<dbReference type="FunCoup" id="E1BMN8">
    <property type="interactions" value="302"/>
</dbReference>
<dbReference type="STRING" id="9913.ENSBTAP00000019742"/>
<dbReference type="PaxDb" id="9913-ENSBTAP00000019742"/>
<dbReference type="eggNOG" id="KOG0664">
    <property type="taxonomic scope" value="Eukaryota"/>
</dbReference>
<dbReference type="InParanoid" id="E1BMN8"/>
<dbReference type="OrthoDB" id="192887at2759"/>
<dbReference type="Proteomes" id="UP000009136">
    <property type="component" value="Unplaced"/>
</dbReference>
<dbReference type="GO" id="GO:0005737">
    <property type="term" value="C:cytoplasm"/>
    <property type="evidence" value="ECO:0000318"/>
    <property type="project" value="GO_Central"/>
</dbReference>
<dbReference type="GO" id="GO:0005634">
    <property type="term" value="C:nucleus"/>
    <property type="evidence" value="ECO:0000318"/>
    <property type="project" value="GO_Central"/>
</dbReference>
<dbReference type="GO" id="GO:0005524">
    <property type="term" value="F:ATP binding"/>
    <property type="evidence" value="ECO:0007669"/>
    <property type="project" value="UniProtKB-KW"/>
</dbReference>
<dbReference type="GO" id="GO:0004707">
    <property type="term" value="F:MAP kinase activity"/>
    <property type="evidence" value="ECO:0007669"/>
    <property type="project" value="UniProtKB-EC"/>
</dbReference>
<dbReference type="GO" id="GO:0046872">
    <property type="term" value="F:metal ion binding"/>
    <property type="evidence" value="ECO:0007669"/>
    <property type="project" value="UniProtKB-KW"/>
</dbReference>
<dbReference type="GO" id="GO:0106310">
    <property type="term" value="F:protein serine kinase activity"/>
    <property type="evidence" value="ECO:0007669"/>
    <property type="project" value="RHEA"/>
</dbReference>
<dbReference type="GO" id="GO:0004674">
    <property type="term" value="F:protein serine/threonine kinase activity"/>
    <property type="evidence" value="ECO:0000250"/>
    <property type="project" value="UniProtKB"/>
</dbReference>
<dbReference type="GO" id="GO:0035556">
    <property type="term" value="P:intracellular signal transduction"/>
    <property type="evidence" value="ECO:0000318"/>
    <property type="project" value="GO_Central"/>
</dbReference>
<dbReference type="GO" id="GO:1904262">
    <property type="term" value="P:negative regulation of TORC1 signaling"/>
    <property type="evidence" value="ECO:0000250"/>
    <property type="project" value="UniProtKB"/>
</dbReference>
<dbReference type="GO" id="GO:0050821">
    <property type="term" value="P:protein stabilization"/>
    <property type="evidence" value="ECO:0000250"/>
    <property type="project" value="UniProtKB"/>
</dbReference>
<dbReference type="GO" id="GO:0016055">
    <property type="term" value="P:Wnt signaling pathway"/>
    <property type="evidence" value="ECO:0007669"/>
    <property type="project" value="UniProtKB-KW"/>
</dbReference>
<dbReference type="CDD" id="cd07853">
    <property type="entry name" value="STKc_NLK"/>
    <property type="match status" value="1"/>
</dbReference>
<dbReference type="FunFam" id="1.10.510.10:FF:000162">
    <property type="entry name" value="Mitogen-activated protein kinase"/>
    <property type="match status" value="1"/>
</dbReference>
<dbReference type="FunFam" id="3.30.200.20:FF:000164">
    <property type="entry name" value="Mitogen-activated protein kinase"/>
    <property type="match status" value="1"/>
</dbReference>
<dbReference type="Gene3D" id="3.30.200.20">
    <property type="entry name" value="Phosphorylase Kinase, domain 1"/>
    <property type="match status" value="1"/>
</dbReference>
<dbReference type="Gene3D" id="1.10.510.10">
    <property type="entry name" value="Transferase(Phosphotransferase) domain 1"/>
    <property type="match status" value="1"/>
</dbReference>
<dbReference type="InterPro" id="IPR011009">
    <property type="entry name" value="Kinase-like_dom_sf"/>
</dbReference>
<dbReference type="InterPro" id="IPR050117">
    <property type="entry name" value="MAP_kinase"/>
</dbReference>
<dbReference type="InterPro" id="IPR003527">
    <property type="entry name" value="MAP_kinase_CS"/>
</dbReference>
<dbReference type="InterPro" id="IPR000719">
    <property type="entry name" value="Prot_kinase_dom"/>
</dbReference>
<dbReference type="InterPro" id="IPR017441">
    <property type="entry name" value="Protein_kinase_ATP_BS"/>
</dbReference>
<dbReference type="InterPro" id="IPR008271">
    <property type="entry name" value="Ser/Thr_kinase_AS"/>
</dbReference>
<dbReference type="PANTHER" id="PTHR24055">
    <property type="entry name" value="MITOGEN-ACTIVATED PROTEIN KINASE"/>
    <property type="match status" value="1"/>
</dbReference>
<dbReference type="Pfam" id="PF00069">
    <property type="entry name" value="Pkinase"/>
    <property type="match status" value="1"/>
</dbReference>
<dbReference type="SMART" id="SM00220">
    <property type="entry name" value="S_TKc"/>
    <property type="match status" value="1"/>
</dbReference>
<dbReference type="SUPFAM" id="SSF56112">
    <property type="entry name" value="Protein kinase-like (PK-like)"/>
    <property type="match status" value="1"/>
</dbReference>
<dbReference type="PROSITE" id="PS01351">
    <property type="entry name" value="MAPK"/>
    <property type="match status" value="1"/>
</dbReference>
<dbReference type="PROSITE" id="PS00107">
    <property type="entry name" value="PROTEIN_KINASE_ATP"/>
    <property type="match status" value="1"/>
</dbReference>
<dbReference type="PROSITE" id="PS50011">
    <property type="entry name" value="PROTEIN_KINASE_DOM"/>
    <property type="match status" value="1"/>
</dbReference>
<dbReference type="PROSITE" id="PS00108">
    <property type="entry name" value="PROTEIN_KINASE_ST"/>
    <property type="match status" value="1"/>
</dbReference>
<reference key="1">
    <citation type="journal article" date="2009" name="Science">
        <title>The genome sequence of taurine cattle: a window to ruminant biology and evolution.</title>
        <authorList>
            <consortium name="The bovine genome sequencing and analysis consortium"/>
        </authorList>
    </citation>
    <scope>NUCLEOTIDE SEQUENCE [LARGE SCALE GENOMIC DNA]</scope>
    <source>
        <strain>Hereford</strain>
    </source>
</reference>
<sequence>MPNVFQNLVSCKRVFRELKMAAYNGGTSAAAAGHHHHHHHHLPHLPPPHLHHHHHPQHHLHPGSAAAVHPVQQHTSSAAAAAAAAAAAAAMLNPGQQQPYFPSPAPGQAPGPAAAAPAQVQAAAAATVKAHHHQHSHHPQQQLDIEPDRPIGYGAFGVVWSVTDPRDGKRVALKKMPNVFQNLVSCKRVFRELKMLCFFKHDNVLSALDILQPPHIDYFEEIYVVTELMQSDLHKIIVSPQPLSSDHVKVFLYQILRGLKYLHSAGILHRDIKPGNLLVNSNCVLKICDFGLARVEELDESRHMTQEVVTQYYRAPEILMGSRHYSNAIDIWSVGCIFAELLGRRILFQAQSPIQQLDLITDLLGTPSLEAMRTACEGAKAHILRGPHKQPSLPVLYTLSSQATHEAVHLLCRMLVFDPSKRISAKDALAHPYLDEGRLRYHTCMCKCCFSTSTGRVYTSDFEPVTNPKFDDTFEKNLSSVRQVKEIIHQFILEQQKGNRVPLCINPQSAAFKSFISSTVAQPSEMPPSPLVWE</sequence>
<protein>
    <recommendedName>
        <fullName>Serine/threonine-protein kinase NLK</fullName>
        <ecNumber evidence="1">2.7.11.24</ecNumber>
    </recommendedName>
    <alternativeName>
        <fullName>Nemo-like kinase</fullName>
    </alternativeName>
</protein>
<name>NLK_BOVIN</name>
<feature type="chain" id="PRO_0000413529" description="Serine/threonine-protein kinase NLK">
    <location>
        <begin position="1"/>
        <end position="534"/>
    </location>
</feature>
<feature type="domain" description="Protein kinase" evidence="3">
    <location>
        <begin position="145"/>
        <end position="434"/>
    </location>
</feature>
<feature type="region of interest" description="Required for interaction with TAB2" evidence="1">
    <location>
        <begin position="8"/>
        <end position="311"/>
    </location>
</feature>
<feature type="region of interest" description="Sufficient for interaction with DAPK3" evidence="2">
    <location>
        <begin position="8"/>
        <end position="132"/>
    </location>
</feature>
<feature type="region of interest" description="Disordered" evidence="5">
    <location>
        <begin position="29"/>
        <end position="79"/>
    </location>
</feature>
<feature type="region of interest" description="Disordered" evidence="5">
    <location>
        <begin position="97"/>
        <end position="147"/>
    </location>
</feature>
<feature type="region of interest" description="Sufficient for interaction with DAPK3" evidence="2">
    <location>
        <begin position="131"/>
        <end position="423"/>
    </location>
</feature>
<feature type="region of interest" description="Required for homodimerization and kinase activation and localization to the nucleus" evidence="1">
    <location>
        <begin position="435"/>
        <end position="534"/>
    </location>
</feature>
<feature type="region of interest" description="Required for interaction with TAB2" evidence="1">
    <location>
        <begin position="441"/>
        <end position="534"/>
    </location>
</feature>
<feature type="short sequence motif" description="TQE">
    <location>
        <begin position="305"/>
        <end position="307"/>
    </location>
</feature>
<feature type="compositionally biased region" description="Basic residues" evidence="5">
    <location>
        <begin position="33"/>
        <end position="61"/>
    </location>
</feature>
<feature type="compositionally biased region" description="Low complexity" evidence="5">
    <location>
        <begin position="110"/>
        <end position="126"/>
    </location>
</feature>
<feature type="compositionally biased region" description="Basic residues" evidence="5">
    <location>
        <begin position="129"/>
        <end position="138"/>
    </location>
</feature>
<feature type="active site" description="Proton acceptor" evidence="3 4">
    <location>
        <position position="271"/>
    </location>
</feature>
<feature type="binding site" evidence="3">
    <location>
        <begin position="151"/>
        <end position="159"/>
    </location>
    <ligand>
        <name>ATP</name>
        <dbReference type="ChEBI" id="CHEBI:30616"/>
    </ligand>
</feature>
<feature type="binding site" evidence="3">
    <location>
        <position position="174"/>
    </location>
    <ligand>
        <name>ATP</name>
        <dbReference type="ChEBI" id="CHEBI:30616"/>
    </ligand>
</feature>
<feature type="modified residue" description="Phosphothreonine; by autocatalysis" evidence="2">
    <location>
        <position position="305"/>
    </location>
</feature>
<feature type="modified residue" description="Phosphoserine" evidence="2">
    <location>
        <position position="529"/>
    </location>
</feature>
<evidence type="ECO:0000250" key="1">
    <source>
        <dbReference type="UniProtKB" id="O54949"/>
    </source>
</evidence>
<evidence type="ECO:0000250" key="2">
    <source>
        <dbReference type="UniProtKB" id="Q9UBE8"/>
    </source>
</evidence>
<evidence type="ECO:0000255" key="3">
    <source>
        <dbReference type="PROSITE-ProRule" id="PRU00159"/>
    </source>
</evidence>
<evidence type="ECO:0000255" key="4">
    <source>
        <dbReference type="PROSITE-ProRule" id="PRU10027"/>
    </source>
</evidence>
<evidence type="ECO:0000256" key="5">
    <source>
        <dbReference type="SAM" id="MobiDB-lite"/>
    </source>
</evidence>
<evidence type="ECO:0000305" key="6"/>
<keyword id="KW-0067">ATP-binding</keyword>
<keyword id="KW-0963">Cytoplasm</keyword>
<keyword id="KW-0418">Kinase</keyword>
<keyword id="KW-0460">Magnesium</keyword>
<keyword id="KW-0479">Metal-binding</keyword>
<keyword id="KW-0547">Nucleotide-binding</keyword>
<keyword id="KW-0539">Nucleus</keyword>
<keyword id="KW-0597">Phosphoprotein</keyword>
<keyword id="KW-1185">Reference proteome</keyword>
<keyword id="KW-0723">Serine/threonine-protein kinase</keyword>
<keyword id="KW-0804">Transcription</keyword>
<keyword id="KW-0805">Transcription regulation</keyword>
<keyword id="KW-0808">Transferase</keyword>
<keyword id="KW-0879">Wnt signaling pathway</keyword>